<comment type="function">
    <text evidence="1">Protease subunit of a proteasome-like degradation complex believed to be a general protein degrading machinery.</text>
</comment>
<comment type="catalytic activity">
    <reaction evidence="1">
        <text>ATP-dependent cleavage of peptide bonds with broad specificity.</text>
        <dbReference type="EC" id="3.4.25.2"/>
    </reaction>
</comment>
<comment type="activity regulation">
    <text evidence="1">Allosterically activated by HslU binding.</text>
</comment>
<comment type="subunit">
    <text evidence="1">A double ring-shaped homohexamer of HslV is capped on each side by a ring-shaped HslU homohexamer. The assembly of the HslU/HslV complex is dependent on binding of ATP.</text>
</comment>
<comment type="subcellular location">
    <subcellularLocation>
        <location evidence="1">Cytoplasm</location>
    </subcellularLocation>
</comment>
<comment type="similarity">
    <text evidence="1">Belongs to the peptidase T1B family. HslV subfamily.</text>
</comment>
<name>HSLV_RICRO</name>
<proteinExistence type="inferred from homology"/>
<evidence type="ECO:0000255" key="1">
    <source>
        <dbReference type="HAMAP-Rule" id="MF_00248"/>
    </source>
</evidence>
<protein>
    <recommendedName>
        <fullName evidence="1">ATP-dependent protease subunit HslV</fullName>
        <ecNumber evidence="1">3.4.25.2</ecNumber>
    </recommendedName>
</protein>
<sequence length="182" mass="19738">MSDNLSLHGTTILCLKKNEEIIIAADGQVSHGNTVLKSTARKLRTIANNKIIAGFAGSTADGLALFEKLAVKIEQHKHNLLRSAVELAKDWRSDKYLRRLEAMMIVADRSHILILTGNGDVVEPENNVAAIGSGGLFALSAARALMSYENNLTAEEIALKSMNIAADLCVFSNHNIIMEKVV</sequence>
<feature type="chain" id="PRO_1000078426" description="ATP-dependent protease subunit HslV">
    <location>
        <begin position="1"/>
        <end position="182"/>
    </location>
</feature>
<feature type="active site" evidence="1">
    <location>
        <position position="10"/>
    </location>
</feature>
<feature type="binding site" evidence="1">
    <location>
        <position position="166"/>
    </location>
    <ligand>
        <name>Na(+)</name>
        <dbReference type="ChEBI" id="CHEBI:29101"/>
    </ligand>
</feature>
<feature type="binding site" evidence="1">
    <location>
        <position position="169"/>
    </location>
    <ligand>
        <name>Na(+)</name>
        <dbReference type="ChEBI" id="CHEBI:29101"/>
    </ligand>
</feature>
<feature type="binding site" evidence="1">
    <location>
        <position position="172"/>
    </location>
    <ligand>
        <name>Na(+)</name>
        <dbReference type="ChEBI" id="CHEBI:29101"/>
    </ligand>
</feature>
<gene>
    <name evidence="1" type="primary">hslV</name>
    <name type="ordered locus">RrIowa_0517</name>
</gene>
<reference key="1">
    <citation type="journal article" date="2008" name="Infect. Immun.">
        <title>Genomic comparison of virulent Rickettsia rickettsii Sheila Smith and avirulent Rickettsia rickettsii Iowa.</title>
        <authorList>
            <person name="Ellison D.W."/>
            <person name="Clark T.R."/>
            <person name="Sturdevant D.E."/>
            <person name="Virtaneva K."/>
            <person name="Porcella S.F."/>
            <person name="Hackstadt T."/>
        </authorList>
    </citation>
    <scope>NUCLEOTIDE SEQUENCE [LARGE SCALE GENOMIC DNA]</scope>
    <source>
        <strain>Iowa</strain>
    </source>
</reference>
<keyword id="KW-0021">Allosteric enzyme</keyword>
<keyword id="KW-0963">Cytoplasm</keyword>
<keyword id="KW-0378">Hydrolase</keyword>
<keyword id="KW-0479">Metal-binding</keyword>
<keyword id="KW-0645">Protease</keyword>
<keyword id="KW-0915">Sodium</keyword>
<keyword id="KW-0888">Threonine protease</keyword>
<organism>
    <name type="scientific">Rickettsia rickettsii (strain Iowa)</name>
    <dbReference type="NCBI Taxonomy" id="452659"/>
    <lineage>
        <taxon>Bacteria</taxon>
        <taxon>Pseudomonadati</taxon>
        <taxon>Pseudomonadota</taxon>
        <taxon>Alphaproteobacteria</taxon>
        <taxon>Rickettsiales</taxon>
        <taxon>Rickettsiaceae</taxon>
        <taxon>Rickettsieae</taxon>
        <taxon>Rickettsia</taxon>
        <taxon>spotted fever group</taxon>
    </lineage>
</organism>
<dbReference type="EC" id="3.4.25.2" evidence="1"/>
<dbReference type="EMBL" id="CP000766">
    <property type="protein sequence ID" value="ABY72397.1"/>
    <property type="molecule type" value="Genomic_DNA"/>
</dbReference>
<dbReference type="RefSeq" id="WP_004996101.1">
    <property type="nucleotide sequence ID" value="NC_010263.3"/>
</dbReference>
<dbReference type="SMR" id="B0BX21"/>
<dbReference type="GeneID" id="95362094"/>
<dbReference type="KEGG" id="rrj:RrIowa_0517"/>
<dbReference type="eggNOG" id="COG5405">
    <property type="taxonomic scope" value="Bacteria"/>
</dbReference>
<dbReference type="HOGENOM" id="CLU_093872_1_0_5"/>
<dbReference type="Proteomes" id="UP000000796">
    <property type="component" value="Chromosome"/>
</dbReference>
<dbReference type="GO" id="GO:0009376">
    <property type="term" value="C:HslUV protease complex"/>
    <property type="evidence" value="ECO:0007669"/>
    <property type="project" value="UniProtKB-UniRule"/>
</dbReference>
<dbReference type="GO" id="GO:0005839">
    <property type="term" value="C:proteasome core complex"/>
    <property type="evidence" value="ECO:0007669"/>
    <property type="project" value="InterPro"/>
</dbReference>
<dbReference type="GO" id="GO:0046872">
    <property type="term" value="F:metal ion binding"/>
    <property type="evidence" value="ECO:0007669"/>
    <property type="project" value="UniProtKB-KW"/>
</dbReference>
<dbReference type="GO" id="GO:0004298">
    <property type="term" value="F:threonine-type endopeptidase activity"/>
    <property type="evidence" value="ECO:0007669"/>
    <property type="project" value="UniProtKB-KW"/>
</dbReference>
<dbReference type="GO" id="GO:0051603">
    <property type="term" value="P:proteolysis involved in protein catabolic process"/>
    <property type="evidence" value="ECO:0007669"/>
    <property type="project" value="InterPro"/>
</dbReference>
<dbReference type="CDD" id="cd01913">
    <property type="entry name" value="protease_HslV"/>
    <property type="match status" value="1"/>
</dbReference>
<dbReference type="Gene3D" id="3.60.20.10">
    <property type="entry name" value="Glutamine Phosphoribosylpyrophosphate, subunit 1, domain 1"/>
    <property type="match status" value="1"/>
</dbReference>
<dbReference type="HAMAP" id="MF_00248">
    <property type="entry name" value="HslV"/>
    <property type="match status" value="1"/>
</dbReference>
<dbReference type="InterPro" id="IPR022281">
    <property type="entry name" value="ATP-dep_Prtase_HsIV_su"/>
</dbReference>
<dbReference type="InterPro" id="IPR029055">
    <property type="entry name" value="Ntn_hydrolases_N"/>
</dbReference>
<dbReference type="InterPro" id="IPR001353">
    <property type="entry name" value="Proteasome_sua/b"/>
</dbReference>
<dbReference type="InterPro" id="IPR023333">
    <property type="entry name" value="Proteasome_suB-type"/>
</dbReference>
<dbReference type="NCBIfam" id="TIGR03692">
    <property type="entry name" value="ATP_dep_HslV"/>
    <property type="match status" value="1"/>
</dbReference>
<dbReference type="NCBIfam" id="NF003964">
    <property type="entry name" value="PRK05456.1"/>
    <property type="match status" value="1"/>
</dbReference>
<dbReference type="PANTHER" id="PTHR32194:SF0">
    <property type="entry name" value="ATP-DEPENDENT PROTEASE SUBUNIT HSLV"/>
    <property type="match status" value="1"/>
</dbReference>
<dbReference type="PANTHER" id="PTHR32194">
    <property type="entry name" value="METALLOPROTEASE TLDD"/>
    <property type="match status" value="1"/>
</dbReference>
<dbReference type="Pfam" id="PF00227">
    <property type="entry name" value="Proteasome"/>
    <property type="match status" value="1"/>
</dbReference>
<dbReference type="PIRSF" id="PIRSF039093">
    <property type="entry name" value="HslV"/>
    <property type="match status" value="1"/>
</dbReference>
<dbReference type="SUPFAM" id="SSF56235">
    <property type="entry name" value="N-terminal nucleophile aminohydrolases (Ntn hydrolases)"/>
    <property type="match status" value="1"/>
</dbReference>
<dbReference type="PROSITE" id="PS51476">
    <property type="entry name" value="PROTEASOME_BETA_2"/>
    <property type="match status" value="1"/>
</dbReference>
<accession>B0BX21</accession>